<accession>Q9L7L4</accession>
<name>Y004_MYCPA</name>
<protein>
    <recommendedName>
        <fullName>UPF0232 protein MAP_0004</fullName>
    </recommendedName>
</protein>
<sequence>MSDDQSPSPSGEPTAMDLVRRTLEEARAAARAQGKDAGRGRAAAPTPRRVAGQRRSWSGPGPDARDPQPLGRLARDLARKRGWSAQVAEGTVLGNWTAVVGHQIADHAVPTGLRDGVLSVSAESTAWATQLRMMQAQLLAKIAAAVGNGVVTSLKITGPAAPSWRKGPRHIAGRGPRDTYG</sequence>
<evidence type="ECO:0000256" key="1">
    <source>
        <dbReference type="SAM" id="MobiDB-lite"/>
    </source>
</evidence>
<evidence type="ECO:0000305" key="2"/>
<feature type="chain" id="PRO_0000211363" description="UPF0232 protein MAP_0004">
    <location>
        <begin position="1"/>
        <end position="181"/>
    </location>
</feature>
<feature type="region of interest" description="Disordered" evidence="1">
    <location>
        <begin position="1"/>
        <end position="70"/>
    </location>
</feature>
<feature type="region of interest" description="Disordered" evidence="1">
    <location>
        <begin position="161"/>
        <end position="181"/>
    </location>
</feature>
<feature type="compositionally biased region" description="Polar residues" evidence="1">
    <location>
        <begin position="1"/>
        <end position="11"/>
    </location>
</feature>
<feature type="compositionally biased region" description="Basic and acidic residues" evidence="1">
    <location>
        <begin position="18"/>
        <end position="39"/>
    </location>
</feature>
<feature type="compositionally biased region" description="Low complexity" evidence="1">
    <location>
        <begin position="40"/>
        <end position="50"/>
    </location>
</feature>
<dbReference type="EMBL" id="AF222789">
    <property type="protein sequence ID" value="AAF33696.1"/>
    <property type="status" value="ALT_INIT"/>
    <property type="molecule type" value="Genomic_DNA"/>
</dbReference>
<dbReference type="EMBL" id="AE016958">
    <property type="protein sequence ID" value="AAS02321.1"/>
    <property type="status" value="ALT_INIT"/>
    <property type="molecule type" value="Genomic_DNA"/>
</dbReference>
<dbReference type="RefSeq" id="WP_003874373.1">
    <property type="nucleotide sequence ID" value="NZ_CP106873.1"/>
</dbReference>
<dbReference type="SMR" id="Q9L7L4"/>
<dbReference type="STRING" id="262316.MAP_0004"/>
<dbReference type="KEGG" id="mpa:MAP_0004"/>
<dbReference type="eggNOG" id="COG5512">
    <property type="taxonomic scope" value="Bacteria"/>
</dbReference>
<dbReference type="HOGENOM" id="CLU_087206_0_1_11"/>
<dbReference type="Proteomes" id="UP000000580">
    <property type="component" value="Chromosome"/>
</dbReference>
<dbReference type="HAMAP" id="MF_00630">
    <property type="entry name" value="UPF0232"/>
    <property type="match status" value="1"/>
</dbReference>
<dbReference type="InterPro" id="IPR007922">
    <property type="entry name" value="DciA-like"/>
</dbReference>
<dbReference type="InterPro" id="IPR023007">
    <property type="entry name" value="UPF0232_actinobac"/>
</dbReference>
<dbReference type="NCBIfam" id="NF002871">
    <property type="entry name" value="PRK03195.1"/>
    <property type="match status" value="1"/>
</dbReference>
<dbReference type="PANTHER" id="PTHR36456">
    <property type="entry name" value="UPF0232 PROTEIN SCO3875"/>
    <property type="match status" value="1"/>
</dbReference>
<dbReference type="PANTHER" id="PTHR36456:SF1">
    <property type="entry name" value="UPF0232 PROTEIN SCO3875"/>
    <property type="match status" value="1"/>
</dbReference>
<dbReference type="Pfam" id="PF05258">
    <property type="entry name" value="DciA"/>
    <property type="match status" value="1"/>
</dbReference>
<organism>
    <name type="scientific">Mycolicibacterium paratuberculosis (strain ATCC BAA-968 / K-10)</name>
    <name type="common">Mycobacterium paratuberculosis</name>
    <dbReference type="NCBI Taxonomy" id="262316"/>
    <lineage>
        <taxon>Bacteria</taxon>
        <taxon>Bacillati</taxon>
        <taxon>Actinomycetota</taxon>
        <taxon>Actinomycetes</taxon>
        <taxon>Mycobacteriales</taxon>
        <taxon>Mycobacteriaceae</taxon>
        <taxon>Mycobacterium</taxon>
        <taxon>Mycobacterium avium complex (MAC)</taxon>
    </lineage>
</organism>
<keyword id="KW-1185">Reference proteome</keyword>
<gene>
    <name type="ordered locus">MAP_0004</name>
</gene>
<reference key="1">
    <citation type="journal article" date="2003" name="BMC Microbiol.">
        <title>Genomic homogeneity between Mycobacterium avium subsp. avium and Mycobacterium avium subsp. paratuberculosis belies their divergent growth rates.</title>
        <authorList>
            <person name="Bannantine J.P."/>
            <person name="Zhang Q."/>
            <person name="Li L.L."/>
            <person name="Kapur V."/>
        </authorList>
    </citation>
    <scope>NUCLEOTIDE SEQUENCE [GENOMIC DNA]</scope>
    <source>
        <strain>ATCC BAA-968 / K-10</strain>
    </source>
</reference>
<reference key="2">
    <citation type="journal article" date="2005" name="Proc. Natl. Acad. Sci. U.S.A.">
        <title>The complete genome sequence of Mycobacterium avium subspecies paratuberculosis.</title>
        <authorList>
            <person name="Li L."/>
            <person name="Bannantine J.P."/>
            <person name="Zhang Q."/>
            <person name="Amonsin A."/>
            <person name="May B.J."/>
            <person name="Alt D."/>
            <person name="Banerji N."/>
            <person name="Kanjilal S."/>
            <person name="Kapur V."/>
        </authorList>
    </citation>
    <scope>NUCLEOTIDE SEQUENCE [LARGE SCALE GENOMIC DNA]</scope>
    <source>
        <strain>ATCC BAA-968 / K-10</strain>
    </source>
</reference>
<comment type="similarity">
    <text evidence="2">Belongs to the UPF0232 family.</text>
</comment>
<comment type="sequence caution" evidence="2">
    <conflict type="erroneous initiation">
        <sequence resource="EMBL-CDS" id="AAF33696"/>
    </conflict>
</comment>
<comment type="sequence caution" evidence="2">
    <conflict type="erroneous initiation">
        <sequence resource="EMBL-CDS" id="AAS02321"/>
    </conflict>
</comment>
<proteinExistence type="inferred from homology"/>